<gene>
    <name evidence="1" type="primary">trpC</name>
    <name type="ordered locus">SSA_0635</name>
</gene>
<sequence>MSKEFLPTILKQKEQEVAAMSYEELQPLRSTYSLYEYLKNHPQELQLIAEVKKASPSLGDINLGVDIVEQARTYERCGAAMISVLTDEIFFKGHLDYLREISSQVTIPTLNKDFIIDEKQIVRARNAGATVILLIVAALSEKRLQELYDFATGLGLEVLVETHNLAELETAHRIGAQIIGVNNRNLVTFETDINTSLQLSAHFKDDRVYVSESAIFSKEDAELVAPYFHAVLVGTALMQAENVAEKIKELKIDKG</sequence>
<reference key="1">
    <citation type="journal article" date="2007" name="J. Bacteriol.">
        <title>Genome of the opportunistic pathogen Streptococcus sanguinis.</title>
        <authorList>
            <person name="Xu P."/>
            <person name="Alves J.M."/>
            <person name="Kitten T."/>
            <person name="Brown A."/>
            <person name="Chen Z."/>
            <person name="Ozaki L.S."/>
            <person name="Manque P."/>
            <person name="Ge X."/>
            <person name="Serrano M.G."/>
            <person name="Puiu D."/>
            <person name="Hendricks S."/>
            <person name="Wang Y."/>
            <person name="Chaplin M.D."/>
            <person name="Akan D."/>
            <person name="Paik S."/>
            <person name="Peterson D.L."/>
            <person name="Macrina F.L."/>
            <person name="Buck G.A."/>
        </authorList>
    </citation>
    <scope>NUCLEOTIDE SEQUENCE [LARGE SCALE GENOMIC DNA]</scope>
    <source>
        <strain>SK36</strain>
    </source>
</reference>
<keyword id="KW-0028">Amino-acid biosynthesis</keyword>
<keyword id="KW-0057">Aromatic amino acid biosynthesis</keyword>
<keyword id="KW-0210">Decarboxylase</keyword>
<keyword id="KW-0456">Lyase</keyword>
<keyword id="KW-1185">Reference proteome</keyword>
<keyword id="KW-0822">Tryptophan biosynthesis</keyword>
<accession>A3CLL9</accession>
<name>TRPC_STRSV</name>
<comment type="catalytic activity">
    <reaction evidence="1">
        <text>1-(2-carboxyphenylamino)-1-deoxy-D-ribulose 5-phosphate + H(+) = (1S,2R)-1-C-(indol-3-yl)glycerol 3-phosphate + CO2 + H2O</text>
        <dbReference type="Rhea" id="RHEA:23476"/>
        <dbReference type="ChEBI" id="CHEBI:15377"/>
        <dbReference type="ChEBI" id="CHEBI:15378"/>
        <dbReference type="ChEBI" id="CHEBI:16526"/>
        <dbReference type="ChEBI" id="CHEBI:58613"/>
        <dbReference type="ChEBI" id="CHEBI:58866"/>
        <dbReference type="EC" id="4.1.1.48"/>
    </reaction>
</comment>
<comment type="pathway">
    <text evidence="1">Amino-acid biosynthesis; L-tryptophan biosynthesis; L-tryptophan from chorismate: step 4/5.</text>
</comment>
<comment type="similarity">
    <text evidence="1">Belongs to the TrpC family.</text>
</comment>
<dbReference type="EC" id="4.1.1.48" evidence="1"/>
<dbReference type="EMBL" id="CP000387">
    <property type="protein sequence ID" value="ABN44074.1"/>
    <property type="molecule type" value="Genomic_DNA"/>
</dbReference>
<dbReference type="RefSeq" id="WP_011836635.1">
    <property type="nucleotide sequence ID" value="NC_009009.1"/>
</dbReference>
<dbReference type="RefSeq" id="YP_001034624.1">
    <property type="nucleotide sequence ID" value="NC_009009.1"/>
</dbReference>
<dbReference type="SMR" id="A3CLL9"/>
<dbReference type="STRING" id="388919.SSA_0635"/>
<dbReference type="KEGG" id="ssa:SSA_0635"/>
<dbReference type="PATRIC" id="fig|388919.9.peg.611"/>
<dbReference type="eggNOG" id="COG0134">
    <property type="taxonomic scope" value="Bacteria"/>
</dbReference>
<dbReference type="HOGENOM" id="CLU_034247_2_0_9"/>
<dbReference type="OrthoDB" id="9804217at2"/>
<dbReference type="UniPathway" id="UPA00035">
    <property type="reaction ID" value="UER00043"/>
</dbReference>
<dbReference type="Proteomes" id="UP000002148">
    <property type="component" value="Chromosome"/>
</dbReference>
<dbReference type="GO" id="GO:0004425">
    <property type="term" value="F:indole-3-glycerol-phosphate synthase activity"/>
    <property type="evidence" value="ECO:0007669"/>
    <property type="project" value="UniProtKB-UniRule"/>
</dbReference>
<dbReference type="GO" id="GO:0004640">
    <property type="term" value="F:phosphoribosylanthranilate isomerase activity"/>
    <property type="evidence" value="ECO:0007669"/>
    <property type="project" value="TreeGrafter"/>
</dbReference>
<dbReference type="GO" id="GO:0000162">
    <property type="term" value="P:L-tryptophan biosynthetic process"/>
    <property type="evidence" value="ECO:0007669"/>
    <property type="project" value="UniProtKB-UniRule"/>
</dbReference>
<dbReference type="CDD" id="cd00331">
    <property type="entry name" value="IGPS"/>
    <property type="match status" value="1"/>
</dbReference>
<dbReference type="FunFam" id="3.20.20.70:FF:000024">
    <property type="entry name" value="Indole-3-glycerol phosphate synthase"/>
    <property type="match status" value="1"/>
</dbReference>
<dbReference type="Gene3D" id="3.20.20.70">
    <property type="entry name" value="Aldolase class I"/>
    <property type="match status" value="1"/>
</dbReference>
<dbReference type="HAMAP" id="MF_00134_B">
    <property type="entry name" value="IGPS_B"/>
    <property type="match status" value="1"/>
</dbReference>
<dbReference type="InterPro" id="IPR013785">
    <property type="entry name" value="Aldolase_TIM"/>
</dbReference>
<dbReference type="InterPro" id="IPR045186">
    <property type="entry name" value="Indole-3-glycerol_P_synth"/>
</dbReference>
<dbReference type="InterPro" id="IPR013798">
    <property type="entry name" value="Indole-3-glycerol_P_synth_dom"/>
</dbReference>
<dbReference type="InterPro" id="IPR001468">
    <property type="entry name" value="Indole-3-GlycerolPSynthase_CS"/>
</dbReference>
<dbReference type="InterPro" id="IPR011060">
    <property type="entry name" value="RibuloseP-bd_barrel"/>
</dbReference>
<dbReference type="NCBIfam" id="NF001371">
    <property type="entry name" value="PRK00278.1-3"/>
    <property type="match status" value="1"/>
</dbReference>
<dbReference type="NCBIfam" id="NF001377">
    <property type="entry name" value="PRK00278.2-4"/>
    <property type="match status" value="1"/>
</dbReference>
<dbReference type="PANTHER" id="PTHR22854:SF2">
    <property type="entry name" value="INDOLE-3-GLYCEROL-PHOSPHATE SYNTHASE"/>
    <property type="match status" value="1"/>
</dbReference>
<dbReference type="PANTHER" id="PTHR22854">
    <property type="entry name" value="TRYPTOPHAN BIOSYNTHESIS PROTEIN"/>
    <property type="match status" value="1"/>
</dbReference>
<dbReference type="Pfam" id="PF00218">
    <property type="entry name" value="IGPS"/>
    <property type="match status" value="1"/>
</dbReference>
<dbReference type="SUPFAM" id="SSF51366">
    <property type="entry name" value="Ribulose-phoshate binding barrel"/>
    <property type="match status" value="1"/>
</dbReference>
<dbReference type="PROSITE" id="PS00614">
    <property type="entry name" value="IGPS"/>
    <property type="match status" value="1"/>
</dbReference>
<organism>
    <name type="scientific">Streptococcus sanguinis (strain SK36)</name>
    <dbReference type="NCBI Taxonomy" id="388919"/>
    <lineage>
        <taxon>Bacteria</taxon>
        <taxon>Bacillati</taxon>
        <taxon>Bacillota</taxon>
        <taxon>Bacilli</taxon>
        <taxon>Lactobacillales</taxon>
        <taxon>Streptococcaceae</taxon>
        <taxon>Streptococcus</taxon>
    </lineage>
</organism>
<proteinExistence type="inferred from homology"/>
<protein>
    <recommendedName>
        <fullName evidence="1">Indole-3-glycerol phosphate synthase</fullName>
        <shortName evidence="1">IGPS</shortName>
        <ecNumber evidence="1">4.1.1.48</ecNumber>
    </recommendedName>
</protein>
<feature type="chain" id="PRO_1000018556" description="Indole-3-glycerol phosphate synthase">
    <location>
        <begin position="1"/>
        <end position="255"/>
    </location>
</feature>
<evidence type="ECO:0000255" key="1">
    <source>
        <dbReference type="HAMAP-Rule" id="MF_00134"/>
    </source>
</evidence>